<feature type="signal peptide" evidence="2">
    <location>
        <begin position="1"/>
        <end position="24"/>
    </location>
</feature>
<feature type="chain" id="PRO_0000230230" description="TonB-dependent heme receptor A">
    <location>
        <begin position="25"/>
        <end position="745"/>
    </location>
</feature>
<feature type="domain" description="TBDR plug" evidence="3">
    <location>
        <begin position="45"/>
        <end position="157"/>
    </location>
</feature>
<feature type="domain" description="TBDR beta-barrel" evidence="3">
    <location>
        <begin position="168"/>
        <end position="745"/>
    </location>
</feature>
<organism>
    <name type="scientific">Haemophilus influenzae (strain 86-028NP)</name>
    <dbReference type="NCBI Taxonomy" id="281310"/>
    <lineage>
        <taxon>Bacteria</taxon>
        <taxon>Pseudomonadati</taxon>
        <taxon>Pseudomonadota</taxon>
        <taxon>Gammaproteobacteria</taxon>
        <taxon>Pasteurellales</taxon>
        <taxon>Pasteurellaceae</taxon>
        <taxon>Haemophilus</taxon>
    </lineage>
</organism>
<keyword id="KW-0998">Cell outer membrane</keyword>
<keyword id="KW-0472">Membrane</keyword>
<keyword id="KW-0675">Receptor</keyword>
<keyword id="KW-0732">Signal</keyword>
<keyword id="KW-0798">TonB box</keyword>
<keyword id="KW-0812">Transmembrane</keyword>
<keyword id="KW-1134">Transmembrane beta strand</keyword>
<keyword id="KW-0813">Transport</keyword>
<accession>Q4QP67</accession>
<name>TDHA_HAEI8</name>
<comment type="function">
    <text evidence="1">Heme receptor.</text>
</comment>
<comment type="subcellular location">
    <subcellularLocation>
        <location evidence="3">Cell outer membrane</location>
        <topology evidence="3">Multi-pass membrane protein</topology>
    </subcellularLocation>
</comment>
<comment type="similarity">
    <text evidence="4">Belongs to the TonB-dependent receptor family.</text>
</comment>
<gene>
    <name type="primary">tdhA</name>
    <name type="synonym">hemR</name>
    <name type="ordered locus">NTHI0202</name>
</gene>
<evidence type="ECO:0000250" key="1"/>
<evidence type="ECO:0000255" key="2"/>
<evidence type="ECO:0000255" key="3">
    <source>
        <dbReference type="PROSITE-ProRule" id="PRU01360"/>
    </source>
</evidence>
<evidence type="ECO:0000305" key="4"/>
<protein>
    <recommendedName>
        <fullName>TonB-dependent heme receptor A</fullName>
    </recommendedName>
</protein>
<proteinExistence type="inferred from homology"/>
<sequence>MNILINKRIFLLVTLVGIQLNVTAKQNSSNSNREELLPIIVNTNDDSNKLPGRSVLKQKNIEQQQADNAANLINILPGVNMAGGFRPGGQTLNINGMGDAEDVRVQLDGATKSFEKYQQGSIFIEPELLRRVTVDKGNYSPQYGNGGFAGTVKFETKAARDFLQENQKIGGFLKYGNNSNNNQKTYSTALVLQNEQKNIDLLLFGSVRNAGDYKRPDNSKILFSKNNQKTGLIKVNWQISPEHLLTLSSVYGIHKGWEPFAAKRDILPKPSSGDIMRYGADIAWKRKLVYRDQKDKNYTLKYNYLPENNPWINLSTQFSYSKTTQNDTRPEKAPPVFLGTLGNQSWITYSDLTFDINNTSTFNIKSTRHELLFGLQWLKNTRNTLMYDKSKVKKEDYNYGYFQPYYMPSGRQYTQALYLQDQITWKNIIFSTGVRYDHINNIGQKNFAPQYNDISVGQNYSQKNYNGWSYYLGLKYDVNHYLSLFTNFSRTWRAPVIDEQYETQYKQSSGPVTATSLNLEKEMINQTRVGGIITLNHLFQENDVFQFRTTYFYNRGKNEIFKTRGVNCVGNAADTNHVCPKIIGNYRNLPGYVIQGAELEAYYQSTYLFGEITYSYVKGKRDTSPRNPWGKTSTWIAEIPPRKATTALGFNIPKYNFTAGWRAEFVRRQDRSPLSGDPEAKYWSLPASRGYSLHNLFLSWSPAKIKGMNIKITVDNLFNRAYNPYLGELASGTGRNIKFSLSQKF</sequence>
<reference key="1">
    <citation type="journal article" date="2005" name="J. Bacteriol.">
        <title>Genomic sequence of an otitis media isolate of nontypeable Haemophilus influenzae: comparative study with H. influenzae serotype d, strain KW20.</title>
        <authorList>
            <person name="Harrison A."/>
            <person name="Dyer D.W."/>
            <person name="Gillaspy A."/>
            <person name="Ray W.C."/>
            <person name="Mungur R."/>
            <person name="Carson M.B."/>
            <person name="Zhong H."/>
            <person name="Gipson J."/>
            <person name="Gipson M."/>
            <person name="Johnson L.S."/>
            <person name="Lewis L."/>
            <person name="Bakaletz L.O."/>
            <person name="Munson R.S. Jr."/>
        </authorList>
    </citation>
    <scope>NUCLEOTIDE SEQUENCE [LARGE SCALE GENOMIC DNA]</scope>
    <source>
        <strain>86-028NP</strain>
    </source>
</reference>
<dbReference type="EMBL" id="CP000057">
    <property type="protein sequence ID" value="AAX87180.1"/>
    <property type="molecule type" value="Genomic_DNA"/>
</dbReference>
<dbReference type="RefSeq" id="WP_011271889.1">
    <property type="nucleotide sequence ID" value="NC_007146.2"/>
</dbReference>
<dbReference type="SMR" id="Q4QP67"/>
<dbReference type="GeneID" id="93219043"/>
<dbReference type="KEGG" id="hit:NTHI0202"/>
<dbReference type="HOGENOM" id="CLU_008287_19_3_6"/>
<dbReference type="Proteomes" id="UP000002525">
    <property type="component" value="Chromosome"/>
</dbReference>
<dbReference type="GO" id="GO:0009279">
    <property type="term" value="C:cell outer membrane"/>
    <property type="evidence" value="ECO:0007669"/>
    <property type="project" value="UniProtKB-SubCell"/>
</dbReference>
<dbReference type="GO" id="GO:0015232">
    <property type="term" value="F:heme transmembrane transporter activity"/>
    <property type="evidence" value="ECO:0007669"/>
    <property type="project" value="InterPro"/>
</dbReference>
<dbReference type="GO" id="GO:0015344">
    <property type="term" value="F:siderophore uptake transmembrane transporter activity"/>
    <property type="evidence" value="ECO:0007669"/>
    <property type="project" value="TreeGrafter"/>
</dbReference>
<dbReference type="CDD" id="cd01347">
    <property type="entry name" value="ligand_gated_channel"/>
    <property type="match status" value="1"/>
</dbReference>
<dbReference type="Gene3D" id="2.40.170.20">
    <property type="entry name" value="TonB-dependent receptor, beta-barrel domain"/>
    <property type="match status" value="1"/>
</dbReference>
<dbReference type="Gene3D" id="2.170.130.10">
    <property type="entry name" value="TonB-dependent receptor, plug domain"/>
    <property type="match status" value="1"/>
</dbReference>
<dbReference type="InterPro" id="IPR012910">
    <property type="entry name" value="Plug_dom"/>
</dbReference>
<dbReference type="InterPro" id="IPR037066">
    <property type="entry name" value="Plug_dom_sf"/>
</dbReference>
<dbReference type="InterPro" id="IPR039426">
    <property type="entry name" value="TonB-dep_rcpt-like"/>
</dbReference>
<dbReference type="InterPro" id="IPR000531">
    <property type="entry name" value="TonB-dep_rcpt_b-brl"/>
</dbReference>
<dbReference type="InterPro" id="IPR011276">
    <property type="entry name" value="TonB_haem/Hb_rcpt"/>
</dbReference>
<dbReference type="InterPro" id="IPR010949">
    <property type="entry name" value="TonB_Hb/transfer/lactofer_rcpt"/>
</dbReference>
<dbReference type="InterPro" id="IPR036942">
    <property type="entry name" value="TonB_rcpt_b-brl_sf"/>
</dbReference>
<dbReference type="InterPro" id="IPR010917">
    <property type="entry name" value="TonB_rcpt_CS"/>
</dbReference>
<dbReference type="NCBIfam" id="TIGR01785">
    <property type="entry name" value="TonB-hemin"/>
    <property type="match status" value="1"/>
</dbReference>
<dbReference type="NCBIfam" id="TIGR01786">
    <property type="entry name" value="TonB-hemlactrns"/>
    <property type="match status" value="1"/>
</dbReference>
<dbReference type="PANTHER" id="PTHR30069:SF56">
    <property type="entry name" value="TONB-DEPENDENT HEME RECEPTOR A"/>
    <property type="match status" value="1"/>
</dbReference>
<dbReference type="PANTHER" id="PTHR30069">
    <property type="entry name" value="TONB-DEPENDENT OUTER MEMBRANE RECEPTOR"/>
    <property type="match status" value="1"/>
</dbReference>
<dbReference type="Pfam" id="PF07715">
    <property type="entry name" value="Plug"/>
    <property type="match status" value="1"/>
</dbReference>
<dbReference type="Pfam" id="PF00593">
    <property type="entry name" value="TonB_dep_Rec_b-barrel"/>
    <property type="match status" value="1"/>
</dbReference>
<dbReference type="SUPFAM" id="SSF56935">
    <property type="entry name" value="Porins"/>
    <property type="match status" value="1"/>
</dbReference>
<dbReference type="PROSITE" id="PS01156">
    <property type="entry name" value="TONB_DEPENDENT_REC_2"/>
    <property type="match status" value="1"/>
</dbReference>
<dbReference type="PROSITE" id="PS52016">
    <property type="entry name" value="TONB_DEPENDENT_REC_3"/>
    <property type="match status" value="1"/>
</dbReference>